<organism>
    <name type="scientific">Escherichia phage Mu</name>
    <name type="common">Bacteriophage Mu</name>
    <dbReference type="NCBI Taxonomy" id="2681603"/>
    <lineage>
        <taxon>Viruses</taxon>
        <taxon>Duplodnaviria</taxon>
        <taxon>Heunggongvirae</taxon>
        <taxon>Uroviricota</taxon>
        <taxon>Caudoviricetes</taxon>
        <taxon>Muvirus</taxon>
        <taxon>Muvirus mu</taxon>
    </lineage>
</organism>
<accession>Q38488</accession>
<accession>Q9T1X6</accession>
<feature type="chain" id="PRO_0000077807" description="Uncharacterized protein gp12">
    <location>
        <begin position="1"/>
        <end position="176"/>
    </location>
</feature>
<feature type="sequence conflict" description="In Ref. 1; AAA32400." evidence="2" ref="1">
    <original>S</original>
    <variation>C</variation>
    <location>
        <position position="46"/>
    </location>
</feature>
<organismHost>
    <name type="scientific">Enterobacteriaceae</name>
    <dbReference type="NCBI Taxonomy" id="543"/>
</organismHost>
<keyword id="KW-0244">Early protein</keyword>
<keyword id="KW-1035">Host cytoplasm</keyword>
<keyword id="KW-1185">Reference proteome</keyword>
<comment type="subcellular location">
    <subcellularLocation>
        <location evidence="2">Host cytoplasm</location>
    </subcellularLocation>
</comment>
<comment type="induction">
    <text evidence="1">Expressed in the early phase of the viral replicative cycle. Expression of early genes is repressed by viral Repc (latency) and favored by viral Ner protein.</text>
</comment>
<gene>
    <name type="ordered locus">Mup12</name>
</gene>
<sequence>MFFKTSNPAALLAWDQFMADCLKLREEARHLDKVLGCGCRSVFSTSIGGRYFHGVNFPGNERPFSRELWTVQRPASGNSCRPRTSRIPAHLREQARELAKIWQENIPVTYARTDALLPALGLDFSATIFGPLQWFRVGDVIYVMTGMTPAQGRMTEILSDEFIRAQKQAEVNNGKQ</sequence>
<reference key="1">
    <citation type="book" date="1987" name="Phage Mu">
        <title>Sequence of the left end of Mu.</title>
        <editorList>
            <person name="Symonds N."/>
            <person name="Toussaint A."/>
            <person name="van de Putte P."/>
            <person name="Howe M.M."/>
        </editorList>
        <authorList>
            <person name="Priess H."/>
            <person name="Brauer B."/>
            <person name="Schmidt C."/>
            <person name="Kamp D."/>
        </authorList>
    </citation>
    <scope>NUCLEOTIDE SEQUENCE [GENOMIC DNA]</scope>
</reference>
<reference key="2">
    <citation type="journal article" date="2002" name="J. Mol. Biol.">
        <title>Bacteriophage Mu genome sequence: analysis and comparison with Mu-like prophages in Haemophilus, Neisseria and Deinococcus.</title>
        <authorList>
            <person name="Morgan G.J."/>
            <person name="Hatfull G.F."/>
            <person name="Casjens S."/>
            <person name="Hendrix R.W."/>
        </authorList>
    </citation>
    <scope>NUCLEOTIDE SEQUENCE [LARGE SCALE GENOMIC DNA]</scope>
</reference>
<reference key="3">
    <citation type="journal article" date="1989" name="J. Bacteriol.">
        <title>Localization and regulation of bacteriophage Mu promoters.</title>
        <authorList>
            <person name="Stoddard S.F."/>
            <person name="Howe M.M."/>
        </authorList>
    </citation>
    <scope>INDUCTION</scope>
</reference>
<evidence type="ECO:0000269" key="1">
    <source>
    </source>
</evidence>
<evidence type="ECO:0000305" key="2"/>
<name>GP12_BPMU</name>
<proteinExistence type="evidence at transcript level"/>
<protein>
    <recommendedName>
        <fullName>Uncharacterized protein gp12</fullName>
    </recommendedName>
    <alternativeName>
        <fullName>E13</fullName>
    </alternativeName>
    <alternativeName>
        <fullName>Gene product 12</fullName>
        <shortName>gp12</shortName>
    </alternativeName>
</protein>
<dbReference type="EMBL" id="M64097">
    <property type="protein sequence ID" value="AAA32400.1"/>
    <property type="molecule type" value="Genomic_DNA"/>
</dbReference>
<dbReference type="EMBL" id="AF083977">
    <property type="protein sequence ID" value="AAF01089.1"/>
    <property type="molecule type" value="Genomic_DNA"/>
</dbReference>
<dbReference type="RefSeq" id="NP_050616.1">
    <property type="nucleotide sequence ID" value="NC_000929.1"/>
</dbReference>
<dbReference type="GeneID" id="2636294"/>
<dbReference type="KEGG" id="vg:2636294"/>
<dbReference type="Proteomes" id="UP000002611">
    <property type="component" value="Genome"/>
</dbReference>
<dbReference type="Proteomes" id="UP000401936">
    <property type="component" value="Segment"/>
</dbReference>
<dbReference type="GO" id="GO:0030430">
    <property type="term" value="C:host cell cytoplasm"/>
    <property type="evidence" value="ECO:0007669"/>
    <property type="project" value="UniProtKB-SubCell"/>
</dbReference>